<name>ROK1_PYRO7</name>
<protein>
    <recommendedName>
        <fullName>ATP-dependent RNA helicase ROK1</fullName>
        <ecNumber>3.6.4.13</ecNumber>
    </recommendedName>
</protein>
<evidence type="ECO:0000250" key="1"/>
<evidence type="ECO:0000255" key="2">
    <source>
        <dbReference type="PROSITE-ProRule" id="PRU00541"/>
    </source>
</evidence>
<evidence type="ECO:0000255" key="3">
    <source>
        <dbReference type="PROSITE-ProRule" id="PRU00542"/>
    </source>
</evidence>
<evidence type="ECO:0000256" key="4">
    <source>
        <dbReference type="SAM" id="MobiDB-lite"/>
    </source>
</evidence>
<evidence type="ECO:0000305" key="5"/>
<gene>
    <name type="primary">ROK1</name>
    <name type="ORF">MGG_04523</name>
</gene>
<dbReference type="EC" id="3.6.4.13"/>
<dbReference type="EMBL" id="CM001232">
    <property type="protein sequence ID" value="EHA53767.1"/>
    <property type="molecule type" value="Genomic_DNA"/>
</dbReference>
<dbReference type="RefSeq" id="XP_003713574.1">
    <property type="nucleotide sequence ID" value="XM_003713526.1"/>
</dbReference>
<dbReference type="SMR" id="A4RMV8"/>
<dbReference type="FunCoup" id="A4RMV8">
    <property type="interactions" value="1002"/>
</dbReference>
<dbReference type="STRING" id="242507.A4RMV8"/>
<dbReference type="EnsemblFungi" id="MGG_04523T0">
    <property type="protein sequence ID" value="MGG_04523T0"/>
    <property type="gene ID" value="MGG_04523"/>
</dbReference>
<dbReference type="GeneID" id="2678041"/>
<dbReference type="KEGG" id="mgr:MGG_04523"/>
<dbReference type="VEuPathDB" id="FungiDB:MGG_04523"/>
<dbReference type="eggNOG" id="KOG0344">
    <property type="taxonomic scope" value="Eukaryota"/>
</dbReference>
<dbReference type="HOGENOM" id="CLU_003041_1_4_1"/>
<dbReference type="InParanoid" id="A4RMV8"/>
<dbReference type="OMA" id="FRAGEIW"/>
<dbReference type="OrthoDB" id="360161at2759"/>
<dbReference type="Proteomes" id="UP000009058">
    <property type="component" value="Chromosome 2"/>
</dbReference>
<dbReference type="GO" id="GO:0005730">
    <property type="term" value="C:nucleolus"/>
    <property type="evidence" value="ECO:0007669"/>
    <property type="project" value="UniProtKB-SubCell"/>
</dbReference>
<dbReference type="GO" id="GO:0005524">
    <property type="term" value="F:ATP binding"/>
    <property type="evidence" value="ECO:0007669"/>
    <property type="project" value="UniProtKB-KW"/>
</dbReference>
<dbReference type="GO" id="GO:0016887">
    <property type="term" value="F:ATP hydrolysis activity"/>
    <property type="evidence" value="ECO:0007669"/>
    <property type="project" value="RHEA"/>
</dbReference>
<dbReference type="GO" id="GO:0003723">
    <property type="term" value="F:RNA binding"/>
    <property type="evidence" value="ECO:0007669"/>
    <property type="project" value="UniProtKB-KW"/>
</dbReference>
<dbReference type="GO" id="GO:0003724">
    <property type="term" value="F:RNA helicase activity"/>
    <property type="evidence" value="ECO:0007669"/>
    <property type="project" value="UniProtKB-EC"/>
</dbReference>
<dbReference type="GO" id="GO:0030490">
    <property type="term" value="P:maturation of SSU-rRNA"/>
    <property type="evidence" value="ECO:0007669"/>
    <property type="project" value="InterPro"/>
</dbReference>
<dbReference type="CDD" id="cd17957">
    <property type="entry name" value="DEADc_DDX52"/>
    <property type="match status" value="1"/>
</dbReference>
<dbReference type="CDD" id="cd18787">
    <property type="entry name" value="SF2_C_DEAD"/>
    <property type="match status" value="1"/>
</dbReference>
<dbReference type="Gene3D" id="3.40.50.300">
    <property type="entry name" value="P-loop containing nucleotide triphosphate hydrolases"/>
    <property type="match status" value="2"/>
</dbReference>
<dbReference type="InterPro" id="IPR044764">
    <property type="entry name" value="DDX52/Rok1_DEADc"/>
</dbReference>
<dbReference type="InterPro" id="IPR011545">
    <property type="entry name" value="DEAD/DEAH_box_helicase_dom"/>
</dbReference>
<dbReference type="InterPro" id="IPR014001">
    <property type="entry name" value="Helicase_ATP-bd"/>
</dbReference>
<dbReference type="InterPro" id="IPR001650">
    <property type="entry name" value="Helicase_C-like"/>
</dbReference>
<dbReference type="InterPro" id="IPR027417">
    <property type="entry name" value="P-loop_NTPase"/>
</dbReference>
<dbReference type="PANTHER" id="PTHR24031">
    <property type="entry name" value="RNA HELICASE"/>
    <property type="match status" value="1"/>
</dbReference>
<dbReference type="Pfam" id="PF00270">
    <property type="entry name" value="DEAD"/>
    <property type="match status" value="2"/>
</dbReference>
<dbReference type="Pfam" id="PF00271">
    <property type="entry name" value="Helicase_C"/>
    <property type="match status" value="1"/>
</dbReference>
<dbReference type="SMART" id="SM00487">
    <property type="entry name" value="DEXDc"/>
    <property type="match status" value="1"/>
</dbReference>
<dbReference type="SMART" id="SM00490">
    <property type="entry name" value="HELICc"/>
    <property type="match status" value="1"/>
</dbReference>
<dbReference type="SUPFAM" id="SSF52540">
    <property type="entry name" value="P-loop containing nucleoside triphosphate hydrolases"/>
    <property type="match status" value="1"/>
</dbReference>
<dbReference type="PROSITE" id="PS51192">
    <property type="entry name" value="HELICASE_ATP_BIND_1"/>
    <property type="match status" value="1"/>
</dbReference>
<dbReference type="PROSITE" id="PS51194">
    <property type="entry name" value="HELICASE_CTER"/>
    <property type="match status" value="1"/>
</dbReference>
<organism>
    <name type="scientific">Pyricularia oryzae (strain 70-15 / ATCC MYA-4617 / FGSC 8958)</name>
    <name type="common">Rice blast fungus</name>
    <name type="synonym">Magnaporthe oryzae</name>
    <dbReference type="NCBI Taxonomy" id="242507"/>
    <lineage>
        <taxon>Eukaryota</taxon>
        <taxon>Fungi</taxon>
        <taxon>Dikarya</taxon>
        <taxon>Ascomycota</taxon>
        <taxon>Pezizomycotina</taxon>
        <taxon>Sordariomycetes</taxon>
        <taxon>Sordariomycetidae</taxon>
        <taxon>Magnaporthales</taxon>
        <taxon>Pyriculariaceae</taxon>
        <taxon>Pyricularia</taxon>
    </lineage>
</organism>
<accession>A4RMV8</accession>
<accession>G4MSF5</accession>
<sequence>MDILKVLSRGTKQAPKKPGVPAATLAQANIPSAGVETNPQLYHDNVGPPPKGKKRKRKSRTQDHDQADDAVDDDVELSDFDFFAPKTRRDSDGAGSKTKAADVKKAKKDADEADKARPIELDECKRILRSHRLKYTLLPVQKAAPAKVEKSSAKKKKKKDKGDKVDGAAQAAQGKSDKLPVFPQPLVSFSQLRSAYRISPRLADNLAKGSYKVPTEVQLGALPLLLQPGFALSHEGDGVDDDGKGGDGEALAMLQGASAGVDFLAIAPTGSGKTLSFLLPAINGVLKRRAEKGETGGDSSNDTKHALEAIVVAPTRELASQIANEGRKLAMGTGVRVVLMRKGMRVAAEEDSTEKKSEDQEEDVFESEDEDSLSEDDEEREKSEKPSKKPNKAPITKADILVTTPMLLLNFLSKGTSTTKKRLPRVRSLILDEADVLLDQLFREQTMGIWSACRNPNLRVSFWSATMASNIETHILDNLRAQADDAPAPPLIRLVVGLKDTAVPNISHRLVYTATESGKLLALRQLLHPASFSTTTSSTTTPEDETPLRPPFLVFVQTIERATALHEELKYDIPAAAGGASRVAVLHSSMPESARAAVIRRFRAADVWVLITTDVLARGVDFAGVNGVVNYDVPGSAAAYVHRAGRTGRAGRKGGIAVTFYTKEDIPFVKNVANVIALSERQAGAGESATQKWLLDALPDVSKKDKKELREKGVESRRSVAASKGKARITSKSAWERRKENNRKGAIEGSKRRKIAARDQGDGSDDGGEWGGIDD</sequence>
<comment type="function">
    <text>ATP-dependent RNA helicase involved in 40S ribosomal subunit biogenesis. Required for the processing and cleavage of 35S pre-rRNA at sites A0, A1, and A2, leading to mature 18S rRNA.</text>
</comment>
<comment type="catalytic activity">
    <reaction>
        <text>ATP + H2O = ADP + phosphate + H(+)</text>
        <dbReference type="Rhea" id="RHEA:13065"/>
        <dbReference type="ChEBI" id="CHEBI:15377"/>
        <dbReference type="ChEBI" id="CHEBI:15378"/>
        <dbReference type="ChEBI" id="CHEBI:30616"/>
        <dbReference type="ChEBI" id="CHEBI:43474"/>
        <dbReference type="ChEBI" id="CHEBI:456216"/>
        <dbReference type="EC" id="3.6.4.13"/>
    </reaction>
</comment>
<comment type="subunit">
    <text evidence="1">Interacts with the U3 snoRNA and is associated with the 90S and 40S pre-ribosomes.</text>
</comment>
<comment type="subcellular location">
    <subcellularLocation>
        <location evidence="1">Nucleus</location>
        <location evidence="1">Nucleolus</location>
    </subcellularLocation>
</comment>
<comment type="domain">
    <text>The Q motif is unique to and characteristic of the DEAD box family of RNA helicases and controls ATP binding and hydrolysis.</text>
</comment>
<comment type="similarity">
    <text evidence="5">Belongs to the DEAD box helicase family. DDX52/ROK1 subfamily.</text>
</comment>
<reference key="1">
    <citation type="journal article" date="2005" name="Nature">
        <title>The genome sequence of the rice blast fungus Magnaporthe grisea.</title>
        <authorList>
            <person name="Dean R.A."/>
            <person name="Talbot N.J."/>
            <person name="Ebbole D.J."/>
            <person name="Farman M.L."/>
            <person name="Mitchell T.K."/>
            <person name="Orbach M.J."/>
            <person name="Thon M.R."/>
            <person name="Kulkarni R."/>
            <person name="Xu J.-R."/>
            <person name="Pan H."/>
            <person name="Read N.D."/>
            <person name="Lee Y.-H."/>
            <person name="Carbone I."/>
            <person name="Brown D."/>
            <person name="Oh Y.Y."/>
            <person name="Donofrio N."/>
            <person name="Jeong J.S."/>
            <person name="Soanes D.M."/>
            <person name="Djonovic S."/>
            <person name="Kolomiets E."/>
            <person name="Rehmeyer C."/>
            <person name="Li W."/>
            <person name="Harding M."/>
            <person name="Kim S."/>
            <person name="Lebrun M.-H."/>
            <person name="Bohnert H."/>
            <person name="Coughlan S."/>
            <person name="Butler J."/>
            <person name="Calvo S.E."/>
            <person name="Ma L.-J."/>
            <person name="Nicol R."/>
            <person name="Purcell S."/>
            <person name="Nusbaum C."/>
            <person name="Galagan J.E."/>
            <person name="Birren B.W."/>
        </authorList>
    </citation>
    <scope>NUCLEOTIDE SEQUENCE [LARGE SCALE GENOMIC DNA]</scope>
    <source>
        <strain>70-15 / ATCC MYA-4617 / FGSC 8958</strain>
    </source>
</reference>
<keyword id="KW-0067">ATP-binding</keyword>
<keyword id="KW-0347">Helicase</keyword>
<keyword id="KW-0378">Hydrolase</keyword>
<keyword id="KW-0547">Nucleotide-binding</keyword>
<keyword id="KW-0539">Nucleus</keyword>
<keyword id="KW-1185">Reference proteome</keyword>
<keyword id="KW-0690">Ribosome biogenesis</keyword>
<keyword id="KW-0694">RNA-binding</keyword>
<keyword id="KW-0698">rRNA processing</keyword>
<feature type="chain" id="PRO_0000294663" description="ATP-dependent RNA helicase ROK1">
    <location>
        <begin position="1"/>
        <end position="775"/>
    </location>
</feature>
<feature type="domain" description="Helicase ATP-binding" evidence="2">
    <location>
        <begin position="254"/>
        <end position="485"/>
    </location>
</feature>
<feature type="domain" description="Helicase C-terminal" evidence="3">
    <location>
        <begin position="533"/>
        <end position="698"/>
    </location>
</feature>
<feature type="region of interest" description="Disordered" evidence="4">
    <location>
        <begin position="1"/>
        <end position="113"/>
    </location>
</feature>
<feature type="region of interest" description="Disordered" evidence="4">
    <location>
        <begin position="144"/>
        <end position="177"/>
    </location>
</feature>
<feature type="region of interest" description="Disordered" evidence="4">
    <location>
        <begin position="346"/>
        <end position="396"/>
    </location>
</feature>
<feature type="region of interest" description="Disordered" evidence="4">
    <location>
        <begin position="708"/>
        <end position="775"/>
    </location>
</feature>
<feature type="short sequence motif" description="Q motif" evidence="1">
    <location>
        <begin position="191"/>
        <end position="219"/>
    </location>
</feature>
<feature type="short sequence motif" description="DEAD box">
    <location>
        <begin position="432"/>
        <end position="435"/>
    </location>
</feature>
<feature type="compositionally biased region" description="Polar residues" evidence="4">
    <location>
        <begin position="26"/>
        <end position="40"/>
    </location>
</feature>
<feature type="compositionally biased region" description="Acidic residues" evidence="4">
    <location>
        <begin position="68"/>
        <end position="79"/>
    </location>
</feature>
<feature type="compositionally biased region" description="Basic and acidic residues" evidence="4">
    <location>
        <begin position="99"/>
        <end position="113"/>
    </location>
</feature>
<feature type="compositionally biased region" description="Acidic residues" evidence="4">
    <location>
        <begin position="359"/>
        <end position="379"/>
    </location>
</feature>
<feature type="compositionally biased region" description="Basic and acidic residues" evidence="4">
    <location>
        <begin position="708"/>
        <end position="718"/>
    </location>
</feature>
<feature type="compositionally biased region" description="Basic and acidic residues" evidence="4">
    <location>
        <begin position="734"/>
        <end position="761"/>
    </location>
</feature>
<feature type="compositionally biased region" description="Acidic residues" evidence="4">
    <location>
        <begin position="762"/>
        <end position="775"/>
    </location>
</feature>
<feature type="binding site" evidence="2">
    <location>
        <begin position="267"/>
        <end position="274"/>
    </location>
    <ligand>
        <name>ATP</name>
        <dbReference type="ChEBI" id="CHEBI:30616"/>
    </ligand>
</feature>
<proteinExistence type="inferred from homology"/>